<reference key="1">
    <citation type="journal article" date="2002" name="Science">
        <title>50 million years of genomic stasis in endosymbiotic bacteria.</title>
        <authorList>
            <person name="Tamas I."/>
            <person name="Klasson L."/>
            <person name="Canbaeck B."/>
            <person name="Naeslund A.K."/>
            <person name="Eriksson A.-S."/>
            <person name="Wernegreen J.J."/>
            <person name="Sandstroem J.P."/>
            <person name="Moran N.A."/>
            <person name="Andersson S.G.E."/>
        </authorList>
    </citation>
    <scope>NUCLEOTIDE SEQUENCE [LARGE SCALE GENOMIC DNA]</scope>
    <source>
        <strain>Sg</strain>
    </source>
</reference>
<evidence type="ECO:0000255" key="1">
    <source>
        <dbReference type="HAMAP-Rule" id="MF_02087"/>
    </source>
</evidence>
<comment type="function">
    <text evidence="1">Pyridoxal 5'-phosphate (PLP)-binding protein, which is involved in PLP homeostasis.</text>
</comment>
<comment type="subunit">
    <text evidence="1">Monomer.</text>
</comment>
<comment type="similarity">
    <text evidence="1">Belongs to the pyridoxal phosphate-binding protein YggS/PROSC family.</text>
</comment>
<dbReference type="EMBL" id="AE013218">
    <property type="protein sequence ID" value="AAM68072.1"/>
    <property type="molecule type" value="Genomic_DNA"/>
</dbReference>
<dbReference type="RefSeq" id="WP_011054038.1">
    <property type="nucleotide sequence ID" value="NC_004061.1"/>
</dbReference>
<dbReference type="SMR" id="Q8K929"/>
<dbReference type="STRING" id="198804.BUsg_531"/>
<dbReference type="GeneID" id="93004006"/>
<dbReference type="KEGG" id="bas:BUsg_531"/>
<dbReference type="eggNOG" id="COG0325">
    <property type="taxonomic scope" value="Bacteria"/>
</dbReference>
<dbReference type="HOGENOM" id="CLU_059988_0_1_6"/>
<dbReference type="Proteomes" id="UP000000416">
    <property type="component" value="Chromosome"/>
</dbReference>
<dbReference type="GO" id="GO:0030170">
    <property type="term" value="F:pyridoxal phosphate binding"/>
    <property type="evidence" value="ECO:0007669"/>
    <property type="project" value="UniProtKB-UniRule"/>
</dbReference>
<dbReference type="CDD" id="cd06824">
    <property type="entry name" value="PLPDE_III_Yggs_like"/>
    <property type="match status" value="1"/>
</dbReference>
<dbReference type="Gene3D" id="3.20.20.10">
    <property type="entry name" value="Alanine racemase"/>
    <property type="match status" value="1"/>
</dbReference>
<dbReference type="HAMAP" id="MF_02087">
    <property type="entry name" value="PLP_homeostasis"/>
    <property type="match status" value="1"/>
</dbReference>
<dbReference type="InterPro" id="IPR001608">
    <property type="entry name" value="Ala_racemase_N"/>
</dbReference>
<dbReference type="InterPro" id="IPR029066">
    <property type="entry name" value="PLP-binding_barrel"/>
</dbReference>
<dbReference type="InterPro" id="IPR011078">
    <property type="entry name" value="PyrdxlP_homeostasis"/>
</dbReference>
<dbReference type="NCBIfam" id="TIGR00044">
    <property type="entry name" value="YggS family pyridoxal phosphate-dependent enzyme"/>
    <property type="match status" value="1"/>
</dbReference>
<dbReference type="PANTHER" id="PTHR10146">
    <property type="entry name" value="PROLINE SYNTHETASE CO-TRANSCRIBED BACTERIAL HOMOLOG PROTEIN"/>
    <property type="match status" value="1"/>
</dbReference>
<dbReference type="PANTHER" id="PTHR10146:SF14">
    <property type="entry name" value="PYRIDOXAL PHOSPHATE HOMEOSTASIS PROTEIN"/>
    <property type="match status" value="1"/>
</dbReference>
<dbReference type="Pfam" id="PF01168">
    <property type="entry name" value="Ala_racemase_N"/>
    <property type="match status" value="1"/>
</dbReference>
<dbReference type="PIRSF" id="PIRSF004848">
    <property type="entry name" value="YBL036c_PLPDEIII"/>
    <property type="match status" value="1"/>
</dbReference>
<dbReference type="SUPFAM" id="SSF51419">
    <property type="entry name" value="PLP-binding barrel"/>
    <property type="match status" value="1"/>
</dbReference>
<dbReference type="PROSITE" id="PS01211">
    <property type="entry name" value="UPF0001"/>
    <property type="match status" value="1"/>
</dbReference>
<sequence length="229" mass="26944">MNNININIKIIKKKIQYFLKKNNYPLKKIKIIAVSKNQGIDKIKLAISSGIHEFGENYVQEGIDKIQKLKKYQNIIWHFIGKVQSNKTKIIAENFDWCQTIDREKIAILLNKYREKKSFPMNVLMQINISNEVTKNGICIKNYKKLAKTISLMPNLNFRGIMMMPEVEKKMIKQNDNYKNGNFIFNELKKEYQSIDTLSLGTSFDIENALLFHSNMIRIGRFIFKNQVR</sequence>
<accession>Q8K929</accession>
<proteinExistence type="inferred from homology"/>
<gene>
    <name type="ordered locus">BUsg_531</name>
</gene>
<organism>
    <name type="scientific">Buchnera aphidicola subsp. Schizaphis graminum (strain Sg)</name>
    <dbReference type="NCBI Taxonomy" id="198804"/>
    <lineage>
        <taxon>Bacteria</taxon>
        <taxon>Pseudomonadati</taxon>
        <taxon>Pseudomonadota</taxon>
        <taxon>Gammaproteobacteria</taxon>
        <taxon>Enterobacterales</taxon>
        <taxon>Erwiniaceae</taxon>
        <taxon>Buchnera</taxon>
    </lineage>
</organism>
<name>PLPHP_BUCAP</name>
<keyword id="KW-0663">Pyridoxal phosphate</keyword>
<protein>
    <recommendedName>
        <fullName evidence="1">Pyridoxal phosphate homeostasis protein</fullName>
        <shortName evidence="1">PLP homeostasis protein</shortName>
    </recommendedName>
</protein>
<feature type="chain" id="PRO_0000163192" description="Pyridoxal phosphate homeostasis protein">
    <location>
        <begin position="1"/>
        <end position="229"/>
    </location>
</feature>
<feature type="modified residue" description="N6-(pyridoxal phosphate)lysine" evidence="1">
    <location>
        <position position="36"/>
    </location>
</feature>